<dbReference type="EC" id="2.6.1.16" evidence="1"/>
<dbReference type="EMBL" id="BA000045">
    <property type="protein sequence ID" value="BAC90156.1"/>
    <property type="molecule type" value="Genomic_DNA"/>
</dbReference>
<dbReference type="RefSeq" id="NP_925161.1">
    <property type="nucleotide sequence ID" value="NC_005125.1"/>
</dbReference>
<dbReference type="RefSeq" id="WP_011142212.1">
    <property type="nucleotide sequence ID" value="NC_005125.1"/>
</dbReference>
<dbReference type="SMR" id="Q7NIG8"/>
<dbReference type="FunCoup" id="Q7NIG8">
    <property type="interactions" value="231"/>
</dbReference>
<dbReference type="STRING" id="251221.gene:10759710"/>
<dbReference type="EnsemblBacteria" id="BAC90156">
    <property type="protein sequence ID" value="BAC90156"/>
    <property type="gene ID" value="BAC90156"/>
</dbReference>
<dbReference type="KEGG" id="gvi:gll2215"/>
<dbReference type="PATRIC" id="fig|251221.4.peg.2249"/>
<dbReference type="eggNOG" id="COG0449">
    <property type="taxonomic scope" value="Bacteria"/>
</dbReference>
<dbReference type="HOGENOM" id="CLU_012520_5_2_3"/>
<dbReference type="InParanoid" id="Q7NIG8"/>
<dbReference type="OrthoDB" id="106547at2"/>
<dbReference type="PhylomeDB" id="Q7NIG8"/>
<dbReference type="Proteomes" id="UP000000557">
    <property type="component" value="Chromosome"/>
</dbReference>
<dbReference type="GO" id="GO:0005829">
    <property type="term" value="C:cytosol"/>
    <property type="evidence" value="ECO:0000318"/>
    <property type="project" value="GO_Central"/>
</dbReference>
<dbReference type="GO" id="GO:0097367">
    <property type="term" value="F:carbohydrate derivative binding"/>
    <property type="evidence" value="ECO:0007669"/>
    <property type="project" value="InterPro"/>
</dbReference>
<dbReference type="GO" id="GO:0004360">
    <property type="term" value="F:glutamine-fructose-6-phosphate transaminase (isomerizing) activity"/>
    <property type="evidence" value="ECO:0000318"/>
    <property type="project" value="GO_Central"/>
</dbReference>
<dbReference type="GO" id="GO:0005975">
    <property type="term" value="P:carbohydrate metabolic process"/>
    <property type="evidence" value="ECO:0007669"/>
    <property type="project" value="UniProtKB-UniRule"/>
</dbReference>
<dbReference type="GO" id="GO:0006002">
    <property type="term" value="P:fructose 6-phosphate metabolic process"/>
    <property type="evidence" value="ECO:0000318"/>
    <property type="project" value="GO_Central"/>
</dbReference>
<dbReference type="GO" id="GO:0006487">
    <property type="term" value="P:protein N-linked glycosylation"/>
    <property type="evidence" value="ECO:0000318"/>
    <property type="project" value="GO_Central"/>
</dbReference>
<dbReference type="GO" id="GO:0006047">
    <property type="term" value="P:UDP-N-acetylglucosamine metabolic process"/>
    <property type="evidence" value="ECO:0000318"/>
    <property type="project" value="GO_Central"/>
</dbReference>
<dbReference type="CDD" id="cd00714">
    <property type="entry name" value="GFAT"/>
    <property type="match status" value="1"/>
</dbReference>
<dbReference type="CDD" id="cd05008">
    <property type="entry name" value="SIS_GlmS_GlmD_1"/>
    <property type="match status" value="1"/>
</dbReference>
<dbReference type="CDD" id="cd05009">
    <property type="entry name" value="SIS_GlmS_GlmD_2"/>
    <property type="match status" value="1"/>
</dbReference>
<dbReference type="FunFam" id="3.40.50.10490:FF:000001">
    <property type="entry name" value="Glutamine--fructose-6-phosphate aminotransferase [isomerizing]"/>
    <property type="match status" value="1"/>
</dbReference>
<dbReference type="FunFam" id="3.40.50.10490:FF:000002">
    <property type="entry name" value="Glutamine--fructose-6-phosphate aminotransferase [isomerizing]"/>
    <property type="match status" value="1"/>
</dbReference>
<dbReference type="FunFam" id="3.60.20.10:FF:000006">
    <property type="entry name" value="Glutamine--fructose-6-phosphate aminotransferase [isomerizing]"/>
    <property type="match status" value="1"/>
</dbReference>
<dbReference type="Gene3D" id="3.40.50.10490">
    <property type="entry name" value="Glucose-6-phosphate isomerase like protein, domain 1"/>
    <property type="match status" value="2"/>
</dbReference>
<dbReference type="Gene3D" id="3.60.20.10">
    <property type="entry name" value="Glutamine Phosphoribosylpyrophosphate, subunit 1, domain 1"/>
    <property type="match status" value="1"/>
</dbReference>
<dbReference type="HAMAP" id="MF_00164">
    <property type="entry name" value="GlmS"/>
    <property type="match status" value="1"/>
</dbReference>
<dbReference type="InterPro" id="IPR017932">
    <property type="entry name" value="GATase_2_dom"/>
</dbReference>
<dbReference type="InterPro" id="IPR005855">
    <property type="entry name" value="GFAT"/>
</dbReference>
<dbReference type="InterPro" id="IPR047084">
    <property type="entry name" value="GFAT_N"/>
</dbReference>
<dbReference type="InterPro" id="IPR035466">
    <property type="entry name" value="GlmS/AgaS_SIS"/>
</dbReference>
<dbReference type="InterPro" id="IPR035490">
    <property type="entry name" value="GlmS/FrlB_SIS"/>
</dbReference>
<dbReference type="InterPro" id="IPR029055">
    <property type="entry name" value="Ntn_hydrolases_N"/>
</dbReference>
<dbReference type="InterPro" id="IPR001347">
    <property type="entry name" value="SIS_dom"/>
</dbReference>
<dbReference type="InterPro" id="IPR046348">
    <property type="entry name" value="SIS_dom_sf"/>
</dbReference>
<dbReference type="NCBIfam" id="TIGR01135">
    <property type="entry name" value="glmS"/>
    <property type="match status" value="1"/>
</dbReference>
<dbReference type="NCBIfam" id="NF001484">
    <property type="entry name" value="PRK00331.1"/>
    <property type="match status" value="1"/>
</dbReference>
<dbReference type="PANTHER" id="PTHR10937">
    <property type="entry name" value="GLUCOSAMINE--FRUCTOSE-6-PHOSPHATE AMINOTRANSFERASE, ISOMERIZING"/>
    <property type="match status" value="1"/>
</dbReference>
<dbReference type="PANTHER" id="PTHR10937:SF0">
    <property type="entry name" value="GLUTAMINE--FRUCTOSE-6-PHOSPHATE TRANSAMINASE (ISOMERIZING)"/>
    <property type="match status" value="1"/>
</dbReference>
<dbReference type="Pfam" id="PF13522">
    <property type="entry name" value="GATase_6"/>
    <property type="match status" value="1"/>
</dbReference>
<dbReference type="Pfam" id="PF01380">
    <property type="entry name" value="SIS"/>
    <property type="match status" value="2"/>
</dbReference>
<dbReference type="SUPFAM" id="SSF56235">
    <property type="entry name" value="N-terminal nucleophile aminohydrolases (Ntn hydrolases)"/>
    <property type="match status" value="1"/>
</dbReference>
<dbReference type="SUPFAM" id="SSF53697">
    <property type="entry name" value="SIS domain"/>
    <property type="match status" value="1"/>
</dbReference>
<dbReference type="PROSITE" id="PS51278">
    <property type="entry name" value="GATASE_TYPE_2"/>
    <property type="match status" value="1"/>
</dbReference>
<dbReference type="PROSITE" id="PS51464">
    <property type="entry name" value="SIS"/>
    <property type="match status" value="2"/>
</dbReference>
<evidence type="ECO:0000255" key="1">
    <source>
        <dbReference type="HAMAP-Rule" id="MF_00164"/>
    </source>
</evidence>
<feature type="initiator methionine" description="Removed" evidence="1">
    <location>
        <position position="1"/>
    </location>
</feature>
<feature type="chain" id="PRO_0000135336" description="Glutamine--fructose-6-phosphate aminotransferase [isomerizing]">
    <location>
        <begin position="2"/>
        <end position="609"/>
    </location>
</feature>
<feature type="domain" description="Glutamine amidotransferase type-2" evidence="1">
    <location>
        <begin position="2"/>
        <end position="219"/>
    </location>
</feature>
<feature type="domain" description="SIS 1" evidence="1">
    <location>
        <begin position="285"/>
        <end position="424"/>
    </location>
</feature>
<feature type="domain" description="SIS 2" evidence="1">
    <location>
        <begin position="458"/>
        <end position="599"/>
    </location>
</feature>
<feature type="active site" description="Nucleophile; for GATase activity" evidence="1">
    <location>
        <position position="2"/>
    </location>
</feature>
<feature type="active site" description="For Fru-6P isomerization activity" evidence="1">
    <location>
        <position position="604"/>
    </location>
</feature>
<organism>
    <name type="scientific">Gloeobacter violaceus (strain ATCC 29082 / PCC 7421)</name>
    <dbReference type="NCBI Taxonomy" id="251221"/>
    <lineage>
        <taxon>Bacteria</taxon>
        <taxon>Bacillati</taxon>
        <taxon>Cyanobacteriota</taxon>
        <taxon>Cyanophyceae</taxon>
        <taxon>Gloeobacterales</taxon>
        <taxon>Gloeobacteraceae</taxon>
        <taxon>Gloeobacter</taxon>
    </lineage>
</organism>
<gene>
    <name evidence="1" type="primary">glmS</name>
    <name type="ordered locus">gll2215</name>
</gene>
<sequence length="609" mass="66042">MCGIVGYIGGRTALPFLVDGLKRLEYRGYDSAGIATVGESGLELVRAKGKLHNLEEKLNGVAQSTGTVGIGHTRWATHGKPEEHNAHPHTDASGRLAVIQNGIIENYAELRLGLKERGCLFKSETDTEVIPHLIACRLAGHSLLEAVLAAVVELKGAFAIAVVSADFPDELIVVRQQAPLVIGFGEGENYFASDVPAIVSHTTRVLTLQDGECARLTRDEVQIHDFSGARLRRTPRSLNWNPSLVEKRGFRHFMLKEIHEQPGVIRDTLEDRIGDATGPIRLGLSSDLFADLERIYIIACGTSWHASLVGKYLIEELAGIPTEVNYASEFRYCPPPLNARTLVIGVSQSGETGDTNAALTAAKARGVRLLGITNRPESSLGALVGELIDTRAGMEIGVAATKTFTAQLVAFYLLALHLAHLRGTQSGERIREILVGLQQLPAQIEGILDTQERYITELAREFDATRDFIFIGRGLNYPIALEGALKLKEISYIHAEGYPAGEMKHGPIALLDSEVPVVAIAVPGKVYEKTLSNAQEAKARDARLIGVAPLDEPAAVETFDQILPVPVVDEILSPILTVVPLQLLAYHIAARRGLDVDQPRNLAKSVTVE</sequence>
<reference key="1">
    <citation type="journal article" date="2003" name="DNA Res.">
        <title>Complete genome structure of Gloeobacter violaceus PCC 7421, a cyanobacterium that lacks thylakoids.</title>
        <authorList>
            <person name="Nakamura Y."/>
            <person name="Kaneko T."/>
            <person name="Sato S."/>
            <person name="Mimuro M."/>
            <person name="Miyashita H."/>
            <person name="Tsuchiya T."/>
            <person name="Sasamoto S."/>
            <person name="Watanabe A."/>
            <person name="Kawashima K."/>
            <person name="Kishida Y."/>
            <person name="Kiyokawa C."/>
            <person name="Kohara M."/>
            <person name="Matsumoto M."/>
            <person name="Matsuno A."/>
            <person name="Nakazaki N."/>
            <person name="Shimpo S."/>
            <person name="Takeuchi C."/>
            <person name="Yamada M."/>
            <person name="Tabata S."/>
        </authorList>
    </citation>
    <scope>NUCLEOTIDE SEQUENCE [LARGE SCALE GENOMIC DNA]</scope>
    <source>
        <strain>ATCC 29082 / PCC 7421</strain>
    </source>
</reference>
<proteinExistence type="inferred from homology"/>
<protein>
    <recommendedName>
        <fullName evidence="1">Glutamine--fructose-6-phosphate aminotransferase [isomerizing]</fullName>
        <ecNumber evidence="1">2.6.1.16</ecNumber>
    </recommendedName>
    <alternativeName>
        <fullName evidence="1">D-fructose-6-phosphate amidotransferase</fullName>
    </alternativeName>
    <alternativeName>
        <fullName evidence="1">GFAT</fullName>
    </alternativeName>
    <alternativeName>
        <fullName evidence="1">Glucosamine-6-phosphate synthase</fullName>
    </alternativeName>
    <alternativeName>
        <fullName evidence="1">Hexosephosphate aminotransferase</fullName>
    </alternativeName>
    <alternativeName>
        <fullName evidence="1">L-glutamine--D-fructose-6-phosphate amidotransferase</fullName>
    </alternativeName>
</protein>
<name>GLMS_GLOVI</name>
<accession>Q7NIG8</accession>
<keyword id="KW-0032">Aminotransferase</keyword>
<keyword id="KW-0963">Cytoplasm</keyword>
<keyword id="KW-0315">Glutamine amidotransferase</keyword>
<keyword id="KW-1185">Reference proteome</keyword>
<keyword id="KW-0677">Repeat</keyword>
<keyword id="KW-0808">Transferase</keyword>
<comment type="function">
    <text evidence="1">Catalyzes the first step in hexosamine metabolism, converting fructose-6P into glucosamine-6P using glutamine as a nitrogen source.</text>
</comment>
<comment type="catalytic activity">
    <reaction evidence="1">
        <text>D-fructose 6-phosphate + L-glutamine = D-glucosamine 6-phosphate + L-glutamate</text>
        <dbReference type="Rhea" id="RHEA:13237"/>
        <dbReference type="ChEBI" id="CHEBI:29985"/>
        <dbReference type="ChEBI" id="CHEBI:58359"/>
        <dbReference type="ChEBI" id="CHEBI:58725"/>
        <dbReference type="ChEBI" id="CHEBI:61527"/>
        <dbReference type="EC" id="2.6.1.16"/>
    </reaction>
</comment>
<comment type="subunit">
    <text evidence="1">Homodimer.</text>
</comment>
<comment type="subcellular location">
    <subcellularLocation>
        <location evidence="1">Cytoplasm</location>
    </subcellularLocation>
</comment>